<dbReference type="EMBL" id="CP001616">
    <property type="protein sequence ID" value="ACQ93671.1"/>
    <property type="molecule type" value="Genomic_DNA"/>
</dbReference>
<dbReference type="RefSeq" id="WP_015879139.1">
    <property type="nucleotide sequence ID" value="NC_012691.1"/>
</dbReference>
<dbReference type="SMR" id="C4L7Q5"/>
<dbReference type="STRING" id="595494.Tola_2072"/>
<dbReference type="KEGG" id="tau:Tola_2072"/>
<dbReference type="eggNOG" id="COG2974">
    <property type="taxonomic scope" value="Bacteria"/>
</dbReference>
<dbReference type="HOGENOM" id="CLU_052038_1_1_6"/>
<dbReference type="OrthoDB" id="5290530at2"/>
<dbReference type="Proteomes" id="UP000009073">
    <property type="component" value="Chromosome"/>
</dbReference>
<dbReference type="GO" id="GO:0043590">
    <property type="term" value="C:bacterial nucleoid"/>
    <property type="evidence" value="ECO:0007669"/>
    <property type="project" value="TreeGrafter"/>
</dbReference>
<dbReference type="GO" id="GO:0005737">
    <property type="term" value="C:cytoplasm"/>
    <property type="evidence" value="ECO:0007669"/>
    <property type="project" value="UniProtKB-UniRule"/>
</dbReference>
<dbReference type="GO" id="GO:0003690">
    <property type="term" value="F:double-stranded DNA binding"/>
    <property type="evidence" value="ECO:0007669"/>
    <property type="project" value="TreeGrafter"/>
</dbReference>
<dbReference type="GO" id="GO:0006310">
    <property type="term" value="P:DNA recombination"/>
    <property type="evidence" value="ECO:0007669"/>
    <property type="project" value="UniProtKB-UniRule"/>
</dbReference>
<dbReference type="GO" id="GO:0000018">
    <property type="term" value="P:regulation of DNA recombination"/>
    <property type="evidence" value="ECO:0007669"/>
    <property type="project" value="TreeGrafter"/>
</dbReference>
<dbReference type="HAMAP" id="MF_00194">
    <property type="entry name" value="RdgC"/>
    <property type="match status" value="1"/>
</dbReference>
<dbReference type="InterPro" id="IPR007476">
    <property type="entry name" value="RdgC"/>
</dbReference>
<dbReference type="NCBIfam" id="NF001462">
    <property type="entry name" value="PRK00321.1-3"/>
    <property type="match status" value="1"/>
</dbReference>
<dbReference type="NCBIfam" id="NF001464">
    <property type="entry name" value="PRK00321.1-5"/>
    <property type="match status" value="1"/>
</dbReference>
<dbReference type="PANTHER" id="PTHR38103">
    <property type="entry name" value="RECOMBINATION-ASSOCIATED PROTEIN RDGC"/>
    <property type="match status" value="1"/>
</dbReference>
<dbReference type="PANTHER" id="PTHR38103:SF1">
    <property type="entry name" value="RECOMBINATION-ASSOCIATED PROTEIN RDGC"/>
    <property type="match status" value="1"/>
</dbReference>
<dbReference type="Pfam" id="PF04381">
    <property type="entry name" value="RdgC"/>
    <property type="match status" value="1"/>
</dbReference>
<feature type="chain" id="PRO_1000204028" description="Recombination-associated protein RdgC">
    <location>
        <begin position="1"/>
        <end position="302"/>
    </location>
</feature>
<accession>C4L7Q5</accession>
<gene>
    <name evidence="1" type="primary">rdgC</name>
    <name type="ordered locus">Tola_2072</name>
</gene>
<organism>
    <name type="scientific">Tolumonas auensis (strain DSM 9187 / NBRC 110442 / TA 4)</name>
    <dbReference type="NCBI Taxonomy" id="595494"/>
    <lineage>
        <taxon>Bacteria</taxon>
        <taxon>Pseudomonadati</taxon>
        <taxon>Pseudomonadota</taxon>
        <taxon>Gammaproteobacteria</taxon>
        <taxon>Aeromonadales</taxon>
        <taxon>Aeromonadaceae</taxon>
        <taxon>Tolumonas</taxon>
    </lineage>
</organism>
<name>RDGC_TOLAT</name>
<evidence type="ECO:0000255" key="1">
    <source>
        <dbReference type="HAMAP-Rule" id="MF_00194"/>
    </source>
</evidence>
<keyword id="KW-0963">Cytoplasm</keyword>
<keyword id="KW-0233">DNA recombination</keyword>
<keyword id="KW-1185">Reference proteome</keyword>
<comment type="function">
    <text evidence="1">May be involved in recombination.</text>
</comment>
<comment type="subcellular location">
    <subcellularLocation>
        <location evidence="1">Cytoplasm</location>
        <location evidence="1">Nucleoid</location>
    </subcellularLocation>
</comment>
<comment type="similarity">
    <text evidence="1">Belongs to the RdgC family.</text>
</comment>
<sequence>MWFKNLQLYRFTRPFEHDADSLEKMLQSHLFSPCGSQEMSKFGWISPLGKHAEVLVHEAQGQMLLCAKKEEKVLPAAVIKDMLQEKIDEMEAAQGRALKKKEKESLKEEILHTLLPRAFPRSSQTFLWINPAENYLVVDAGSAKKADDVLSLLRKCTGSLPVVPFALQNPPEITMTEWLNAGAAPGGFVLEDEAELRSALEHGGIIRCKEQDLVTEEIKAHLLADKMVTKLALNWSDTVSFVLADDLSIKRLKFSEELREQNEDVISEDHVARMDADFALMTGELAKFVPELVAALGGEKAE</sequence>
<protein>
    <recommendedName>
        <fullName evidence="1">Recombination-associated protein RdgC</fullName>
    </recommendedName>
</protein>
<reference key="1">
    <citation type="submission" date="2009-05" db="EMBL/GenBank/DDBJ databases">
        <title>Complete sequence of Tolumonas auensis DSM 9187.</title>
        <authorList>
            <consortium name="US DOE Joint Genome Institute"/>
            <person name="Lucas S."/>
            <person name="Copeland A."/>
            <person name="Lapidus A."/>
            <person name="Glavina del Rio T."/>
            <person name="Tice H."/>
            <person name="Bruce D."/>
            <person name="Goodwin L."/>
            <person name="Pitluck S."/>
            <person name="Chertkov O."/>
            <person name="Brettin T."/>
            <person name="Detter J.C."/>
            <person name="Han C."/>
            <person name="Larimer F."/>
            <person name="Land M."/>
            <person name="Hauser L."/>
            <person name="Kyrpides N."/>
            <person name="Mikhailova N."/>
            <person name="Spring S."/>
            <person name="Beller H."/>
        </authorList>
    </citation>
    <scope>NUCLEOTIDE SEQUENCE [LARGE SCALE GENOMIC DNA]</scope>
    <source>
        <strain>DSM 9187 / NBRC 110442 / TA 4</strain>
    </source>
</reference>
<proteinExistence type="inferred from homology"/>